<comment type="function">
    <text evidence="1 7 8 9">Deubiquitinating enzyme that plays a key role in chromatin by mediating deubiquitination of histone H2A and HCFC1 (By similarity) (PubMed:35446349). Catalytic component of the polycomb repressive deubiquitinase (PR-DUB) complex, a complex that specifically mediates deubiquitination of histone H2A monoubiquitinated at 'Lys-120' (H2AK119ub1) (By similarity) (PubMed:32747411, PubMed:35446349). Does not deubiquitinate monoubiquitinated histone H2B (By similarity). The PR-DUB complex is an epigenetic regulator of gene expression and acts as a transcriptional coactivator, affecting genes involved in development, cell communication, signaling, cell proliferation and cell viability (By similarity) (PubMed:32747411, PubMed:35446349). Antagonizes PRC1 mediated H2AK119ub1 monoubiquitination (By similarity). As part of the PR-DUB complex, associates with chromatin enriched in histone marks H3K4me1, H3K4me3, and H3K27Ac, but not in H3K27me3 (By similarity) (PubMed:32747411). Acts as a regulator of cell growth by mediating deubiquitination of HCFC1 N-terminal and C-terminal chains, with some specificity toward 'Lys-48'-linked polyubiquitin chains compared to 'Lys-63'-linked polyubiquitin chains. Deubiquitination of HCFC1 does not lead to increase stability of HCFC1. Interferes with the BRCA1 and BARD1 heterodimer activity by inhibiting their ability to mediate ubiquitination and autoubiquitination. It however does not mediate deubiquitination of BRCA1 and BARD1. Able to mediate autodeubiquitination via intramolecular interactions to counteract monoubiquitination at the nuclear localization signal (NLS), thereby protecting it from cytoplasmic sequestration (By similarity). Negatively regulates epithelial-mesenchymal transition (EMT) of trophoblast stem cells during placental development by regulating genes involved in epithelial cell integrity, cell adhesion and cytoskeletal organization (PubMed:34170818).</text>
</comment>
<comment type="catalytic activity">
    <reaction evidence="1">
        <text>Thiol-dependent hydrolysis of ester, thioester, amide, peptide and isopeptide bonds formed by the C-terminal Gly of ubiquitin (a 76-residue protein attached to proteins as an intracellular targeting signal).</text>
        <dbReference type="EC" id="3.4.19.12"/>
    </reaction>
</comment>
<comment type="subunit">
    <text evidence="1 8">Core component of the polycomb repressive deubiquitinase (PR-DUB) complex, at least composed of BAP1, one of ASXL1, ASXL2 or (probably) ASXL3, and one of MBD5 or MBD6. The PR-DUB core associates with a number of accessory proteins, including FOXK1, FOXK2, KDM1B, HCFC1, YY1 and OGT; KDM1B specifically associates with ASXL2 PR-DUB complexes. The BAP1 deubiquitinase activity is not required for PR-DUB assembly. Homodimerizes (via coiled-coil hinge-region between the UCH and ULD domains) to mediate assembly of 2 copies of the BAP1-ASXL heterodimer into a bisymmetric tetramer; dimerization enhances association with nucleosomes. The PR-DUB complex associates with nucleosomes to mediate deubiquitination of 'lys-120' of histone H2AK118ub1 substrates; the association requires the positively charged C-terminal tail of BAP1 (By similarity). Interacts (via ULD domain) with ASXL1 (via DEUBAD domain); the interaction is direct and forms a ubiquitin binding cleft (By similarity) (PubMed:34170818). The interaction with ASXL1 stabilizes BAP1 but is not required for nucleosome binding (By similarity) (PubMed:34170818). Associates (via C-terminus) with nucleosome and chromatosome complexes through direct interaction with DNA and the histone3/4 dimer; this association displaces the histone-2A C-terminal tail, extending and orienting the H2AK118ub1 substrate towards the BAP1 deubiquitinase active site. Also interacts (via arginine finger) directly with the histone H2A-H2B acidic patch; this interaction is not critical for nucleosome-chromatosome association but may play a role in orienting the H2AK118ub1 substrate towards the PR-DUB complex active site. Interacts with BRCA1 (via the RING finger). Interacts (via HBM-like motif) with HCFC1. Interacts (via a C-terminal region overlapping the ULD domain) with YY1; the interaction is direct and requires the interaction with HCFC1. Interacts (when phosphorylated at Thr-492) with FOXK1. Interacts (when phosphorylated at Thr-492) with FOXK2; leading to recruitment of the PR-DUB complex and repression of FOXK2 target genes. Interacts (via non-classical PY-NLS) with TNPO1/transportin-1 (via HEAT repeats 8-12); the interaction is direct, mediates BAP1 nuclear localization and disrupts BAP1 homodimerization. Interacts (via C-terminus) with KPNA1/importin alpha5 and KPNA2/importin alpha1; these interactions can contribute to BAP1 nuclear localization but are less important than the interaction with TNPO1/transportin-1. The interaction with TNPO1/transportin-1 disrupts homodimerization and blocks ubiquitination by UBE2O (By similarity).</text>
</comment>
<comment type="subcellular location">
    <subcellularLocation>
        <location evidence="1">Cytoplasm</location>
    </subcellularLocation>
    <subcellularLocation>
        <location evidence="8">Nucleus</location>
    </subcellularLocation>
    <subcellularLocation>
        <location evidence="7">Chromosome</location>
    </subcellularLocation>
    <text evidence="1 7">Mainly nuclear. Binds to chromatin. Localizes to the cytoplasm when monoubiquitinated by the E2/E3 hybrid ubiquitin-protein ligase UBE2O (By similarity). Recruitment to chromatin is dependent on ASXL1/2/3 and recruitment to specific genes on FOXK1/2 (PubMed:32747411). Nuclear localization is redundantly mediated by the importin and transportin systems; TNPO1/transportin-1 is the major mediator of nuclear localization (By similarity).</text>
</comment>
<comment type="tissue specificity">
    <text evidence="10">Highly expressed in mammary glands, testis and ovary. Up-regulated in mammary glands during puberty, pregnancy, and as a result of parity.</text>
</comment>
<comment type="developmental stage">
    <text evidence="8">At 6.5 days post conception expressed in the embryo and in trophoblast stem cells of the extraembryonic ectoderm (at protein level) (PubMed:34170818). At 9.5 days post conception expressed in the developing labyrinth and spongiotrophoblast layers of the placenta but post-translationaly down-regulated as trophoblast cells differentiate into invasive trophoblast giant cells (at protein level) (PubMed:34170818).</text>
</comment>
<comment type="domain">
    <text evidence="1">Possesses 2 overlapping nuclear localization sequences (NLS), a classic bipartite NLS and a non-classical PY-NLS. The classical NLS probably mediates import via the importin alpha/beta system while the PY-NLS mediates nuclear import via the transportin system.</text>
</comment>
<comment type="domain">
    <text evidence="1">The positively charged C-terminal tail stabilizes the interaction with nucleosomes/chromatosomes through interaction with the DNA backbone. Binding of ASXL1 just upstream of the positively charged C-terminal tail may stabilize its orientation to align the PR-DUB with its H2AK118ub1 substrate.</text>
</comment>
<comment type="domain">
    <text evidence="1">The ubiquitin C-terminal hydrolase (UCH) domain, together with the DEUBAD domain of ASXL1, forms the ubiquitin binding cleft of the PR-DUB complex.</text>
</comment>
<comment type="domain">
    <text evidence="1">The positively charged Arg-finger motif mediates interaction with the histone H2A-H2B acidic patch; this interaction is critical for nucleosomal H2AK119ub1 deubiquitination activity but not nucleosomal binding.</text>
</comment>
<comment type="PTM">
    <text evidence="1">Ubiquitinated: monoubiquitinated at multiple sites within its nuclear localization signal (NLS) BY UBE2O, leading to cytoplasmic retention. Able to mediate autodeubiquitination via intramolecular interactions to counteract cytoplasmic retention. Monoubiquitinated on at least 4 sites near or within its PY-NLS.</text>
</comment>
<comment type="miscellaneous">
    <text evidence="12">Has the ability to ability to suppress tumorigenicity when expressed in NCI-H226 cells.</text>
</comment>
<comment type="similarity">
    <text evidence="11">Belongs to the peptidase C12 family. BAP1 subfamily.</text>
</comment>
<comment type="sequence caution" evidence="11">
    <conflict type="erroneous initiation">
        <sequence resource="EMBL-CDS" id="BAC97918"/>
    </conflict>
    <text>Extended N-terminus.</text>
</comment>
<proteinExistence type="evidence at protein level"/>
<organism>
    <name type="scientific">Mus musculus</name>
    <name type="common">Mouse</name>
    <dbReference type="NCBI Taxonomy" id="10090"/>
    <lineage>
        <taxon>Eukaryota</taxon>
        <taxon>Metazoa</taxon>
        <taxon>Chordata</taxon>
        <taxon>Craniata</taxon>
        <taxon>Vertebrata</taxon>
        <taxon>Euteleostomi</taxon>
        <taxon>Mammalia</taxon>
        <taxon>Eutheria</taxon>
        <taxon>Euarchontoglires</taxon>
        <taxon>Glires</taxon>
        <taxon>Rodentia</taxon>
        <taxon>Myomorpha</taxon>
        <taxon>Muroidea</taxon>
        <taxon>Muridae</taxon>
        <taxon>Murinae</taxon>
        <taxon>Mus</taxon>
        <taxon>Mus</taxon>
    </lineage>
</organism>
<sequence length="728" mass="80492">MNKGWLELESDPGLFTLLVEDFGVKGVQVEEIYDLQSKCQGPVYGFIFLFKWIEERRSRRKVSTLVDDTSVIDDDIVNNMFFAHQLIPNSCATHALLSVLLNCSNVDLGPTLSRMKDFTKGFSPESKGYAIGNAPELAKAHNSHARPEPRHLPEKQNGLSAVRTMEAFHFVSYVPITGRLFELDGLKVYPIDHGPWGEDEEWTDKARRVIMERIGLATAGEPYHDIRFNLMAVVPDRRIKYETRLHVLKVNRQTVLEALQQLIRVTQPELIQTHKSQESQLPEESKPASSKSPLGLEAGRTPVASECTQTDGAEEVAGSCPQTTTHSPPSKCKLVVKPPGSSLNGVPPNPAPIVQRLPAFLDNHNYAKSPMQEEEDLAAGVGRSRVPVRAPQQYSEDEDDYEDEDEDVQNTNPAIRYKRKGTGKPGSLSNSSDGQLSVLQPNTINVLTEKLQESQKDLSVPLSIKTSSGAGSPAVAVPTHSQPSPTPSNESTDTASEIGSAFNSPLRSPIRSANPTRPSSPVTSHISKVLFGEDDSLLRVDCIRYNRAVRDLGPVISTGLLHLAEDGVLSPLALTEGGKGSSPSTRSSQGSQGSSGLEEKEVVEVTESRDKPGLNRSSEPLSGEKYSPKELLALLKCVEAEIANYEACLKEEVEKRKKFKIDDQRRTHNYDEFICTFISMLAQEGMLANLVEQNISVRRRQGVSIGRLHKQRKPDRRKRSRPYKAKRQ</sequence>
<accession>Q99PU7</accession>
<accession>Q3TCR6</accession>
<accession>Q6ZQE6</accession>
<dbReference type="EC" id="3.4.19.12" evidence="1"/>
<dbReference type="EMBL" id="AB047820">
    <property type="protein sequence ID" value="BAB32976.1"/>
    <property type="molecule type" value="mRNA"/>
</dbReference>
<dbReference type="EMBL" id="AK129108">
    <property type="protein sequence ID" value="BAC97918.1"/>
    <property type="status" value="ALT_INIT"/>
    <property type="molecule type" value="mRNA"/>
</dbReference>
<dbReference type="EMBL" id="AK170576">
    <property type="protein sequence ID" value="BAE41889.1"/>
    <property type="molecule type" value="mRNA"/>
</dbReference>
<dbReference type="EMBL" id="BC050901">
    <property type="protein sequence ID" value="AAH50901.1"/>
    <property type="molecule type" value="mRNA"/>
</dbReference>
<dbReference type="CCDS" id="CCDS26910.1"/>
<dbReference type="RefSeq" id="NP_081364.1">
    <property type="nucleotide sequence ID" value="NM_027088.2"/>
</dbReference>
<dbReference type="SMR" id="Q99PU7"/>
<dbReference type="BioGRID" id="222625">
    <property type="interactions" value="29"/>
</dbReference>
<dbReference type="ComplexPortal" id="CPX-423">
    <property type="entry name" value="PR-DUB complex"/>
</dbReference>
<dbReference type="FunCoup" id="Q99PU7">
    <property type="interactions" value="3667"/>
</dbReference>
<dbReference type="IntAct" id="Q99PU7">
    <property type="interactions" value="19"/>
</dbReference>
<dbReference type="STRING" id="10090.ENSMUSP00000022458"/>
<dbReference type="MEROPS" id="C12.004"/>
<dbReference type="GlyGen" id="Q99PU7">
    <property type="glycosylation" value="2 sites, 1 O-linked glycan (1 site)"/>
</dbReference>
<dbReference type="iPTMnet" id="Q99PU7"/>
<dbReference type="PhosphoSitePlus" id="Q99PU7"/>
<dbReference type="jPOST" id="Q99PU7"/>
<dbReference type="PaxDb" id="10090-ENSMUSP00000022458"/>
<dbReference type="PeptideAtlas" id="Q99PU7"/>
<dbReference type="ProteomicsDB" id="277110"/>
<dbReference type="Pumba" id="Q99PU7"/>
<dbReference type="Antibodypedia" id="3812">
    <property type="antibodies" value="489 antibodies from 38 providers"/>
</dbReference>
<dbReference type="DNASU" id="104416"/>
<dbReference type="Ensembl" id="ENSMUST00000022458.11">
    <property type="protein sequence ID" value="ENSMUSP00000022458.5"/>
    <property type="gene ID" value="ENSMUSG00000021901.11"/>
</dbReference>
<dbReference type="GeneID" id="104416"/>
<dbReference type="KEGG" id="mmu:104416"/>
<dbReference type="UCSC" id="uc007sxh.1">
    <property type="organism name" value="mouse"/>
</dbReference>
<dbReference type="AGR" id="MGI:1206586"/>
<dbReference type="CTD" id="8314"/>
<dbReference type="MGI" id="MGI:1206586">
    <property type="gene designation" value="Bap1"/>
</dbReference>
<dbReference type="VEuPathDB" id="HostDB:ENSMUSG00000021901"/>
<dbReference type="eggNOG" id="KOG2778">
    <property type="taxonomic scope" value="Eukaryota"/>
</dbReference>
<dbReference type="GeneTree" id="ENSGT00940000156388"/>
<dbReference type="HOGENOM" id="CLU_018316_5_0_1"/>
<dbReference type="InParanoid" id="Q99PU7"/>
<dbReference type="OMA" id="RIAYEQK"/>
<dbReference type="OrthoDB" id="1924260at2759"/>
<dbReference type="PhylomeDB" id="Q99PU7"/>
<dbReference type="TreeFam" id="TF313976"/>
<dbReference type="Reactome" id="R-MMU-5689603">
    <property type="pathway name" value="UCH proteinases"/>
</dbReference>
<dbReference type="Reactome" id="R-MMU-5693565">
    <property type="pathway name" value="Recruitment and ATM-mediated phosphorylation of repair and signaling proteins at DNA double strand breaks"/>
</dbReference>
<dbReference type="BioGRID-ORCS" id="104416">
    <property type="hits" value="30 hits in 85 CRISPR screens"/>
</dbReference>
<dbReference type="ChiTaRS" id="Bap1">
    <property type="organism name" value="mouse"/>
</dbReference>
<dbReference type="PRO" id="PR:Q99PU7"/>
<dbReference type="Proteomes" id="UP000000589">
    <property type="component" value="Chromosome 14"/>
</dbReference>
<dbReference type="RNAct" id="Q99PU7">
    <property type="molecule type" value="protein"/>
</dbReference>
<dbReference type="Bgee" id="ENSMUSG00000021901">
    <property type="expression patterns" value="Expressed in rostral migratory stream and 259 other cell types or tissues"/>
</dbReference>
<dbReference type="ExpressionAtlas" id="Q99PU7">
    <property type="expression patterns" value="baseline and differential"/>
</dbReference>
<dbReference type="GO" id="GO:0005694">
    <property type="term" value="C:chromosome"/>
    <property type="evidence" value="ECO:0007669"/>
    <property type="project" value="UniProtKB-SubCell"/>
</dbReference>
<dbReference type="GO" id="GO:0005737">
    <property type="term" value="C:cytoplasm"/>
    <property type="evidence" value="ECO:0000250"/>
    <property type="project" value="UniProtKB"/>
</dbReference>
<dbReference type="GO" id="GO:0005829">
    <property type="term" value="C:cytosol"/>
    <property type="evidence" value="ECO:0007669"/>
    <property type="project" value="Ensembl"/>
</dbReference>
<dbReference type="GO" id="GO:0005654">
    <property type="term" value="C:nucleoplasm"/>
    <property type="evidence" value="ECO:0007669"/>
    <property type="project" value="Ensembl"/>
</dbReference>
<dbReference type="GO" id="GO:0005634">
    <property type="term" value="C:nucleus"/>
    <property type="evidence" value="ECO:0000250"/>
    <property type="project" value="UniProtKB"/>
</dbReference>
<dbReference type="GO" id="GO:0035517">
    <property type="term" value="C:PR-DUB complex"/>
    <property type="evidence" value="ECO:0000250"/>
    <property type="project" value="UniProtKB"/>
</dbReference>
<dbReference type="GO" id="GO:0003682">
    <property type="term" value="F:chromatin binding"/>
    <property type="evidence" value="ECO:0000250"/>
    <property type="project" value="UniProtKB"/>
</dbReference>
<dbReference type="GO" id="GO:0031490">
    <property type="term" value="F:chromatin DNA binding"/>
    <property type="evidence" value="ECO:0000314"/>
    <property type="project" value="MGI"/>
</dbReference>
<dbReference type="GO" id="GO:0004843">
    <property type="term" value="F:cysteine-type deubiquitinase activity"/>
    <property type="evidence" value="ECO:0000250"/>
    <property type="project" value="UniProtKB"/>
</dbReference>
<dbReference type="GO" id="GO:0140950">
    <property type="term" value="F:histone H2A deubiquitinase activity"/>
    <property type="evidence" value="ECO:0007669"/>
    <property type="project" value="Ensembl"/>
</dbReference>
<dbReference type="GO" id="GO:0008283">
    <property type="term" value="P:cell population proliferation"/>
    <property type="evidence" value="ECO:0000315"/>
    <property type="project" value="MGI"/>
</dbReference>
<dbReference type="GO" id="GO:0035726">
    <property type="term" value="P:common myeloid progenitor cell proliferation"/>
    <property type="evidence" value="ECO:0000315"/>
    <property type="project" value="MGI"/>
</dbReference>
<dbReference type="GO" id="GO:0030218">
    <property type="term" value="P:erythrocyte differentiation"/>
    <property type="evidence" value="ECO:0000315"/>
    <property type="project" value="MGI"/>
</dbReference>
<dbReference type="GO" id="GO:0043249">
    <property type="term" value="P:erythrocyte maturation"/>
    <property type="evidence" value="ECO:0000315"/>
    <property type="project" value="MGI"/>
</dbReference>
<dbReference type="GO" id="GO:0010467">
    <property type="term" value="P:gene expression"/>
    <property type="evidence" value="ECO:0000315"/>
    <property type="project" value="MGI"/>
</dbReference>
<dbReference type="GO" id="GO:0030851">
    <property type="term" value="P:granulocyte differentiation"/>
    <property type="evidence" value="ECO:0000315"/>
    <property type="project" value="MGI"/>
</dbReference>
<dbReference type="GO" id="GO:0061484">
    <property type="term" value="P:hematopoietic stem cell homeostasis"/>
    <property type="evidence" value="ECO:0000315"/>
    <property type="project" value="MGI"/>
</dbReference>
<dbReference type="GO" id="GO:0001701">
    <property type="term" value="P:in utero embryonic development"/>
    <property type="evidence" value="ECO:0000315"/>
    <property type="project" value="MGI"/>
</dbReference>
<dbReference type="GO" id="GO:0070661">
    <property type="term" value="P:leukocyte proliferation"/>
    <property type="evidence" value="ECO:0000315"/>
    <property type="project" value="MGI"/>
</dbReference>
<dbReference type="GO" id="GO:0061519">
    <property type="term" value="P:macrophage homeostasis"/>
    <property type="evidence" value="ECO:0000315"/>
    <property type="project" value="MGI"/>
</dbReference>
<dbReference type="GO" id="GO:0000278">
    <property type="term" value="P:mitotic cell cycle"/>
    <property type="evidence" value="ECO:0000315"/>
    <property type="project" value="MGI"/>
</dbReference>
<dbReference type="GO" id="GO:0035520">
    <property type="term" value="P:monoubiquitinated protein deubiquitination"/>
    <property type="evidence" value="ECO:0000250"/>
    <property type="project" value="UniProtKB"/>
</dbReference>
<dbReference type="GO" id="GO:0033028">
    <property type="term" value="P:myeloid cell apoptotic process"/>
    <property type="evidence" value="ECO:0000315"/>
    <property type="project" value="MGI"/>
</dbReference>
<dbReference type="GO" id="GO:0008285">
    <property type="term" value="P:negative regulation of cell population proliferation"/>
    <property type="evidence" value="ECO:0000266"/>
    <property type="project" value="MGI"/>
</dbReference>
<dbReference type="GO" id="GO:0045892">
    <property type="term" value="P:negative regulation of DNA-templated transcription"/>
    <property type="evidence" value="ECO:0000250"/>
    <property type="project" value="UniProtKB"/>
</dbReference>
<dbReference type="GO" id="GO:0070050">
    <property type="term" value="P:neuron cellular homeostasis"/>
    <property type="evidence" value="ECO:0000315"/>
    <property type="project" value="MGI"/>
</dbReference>
<dbReference type="GO" id="GO:0030223">
    <property type="term" value="P:neutrophil differentiation"/>
    <property type="evidence" value="ECO:0000315"/>
    <property type="project" value="MGI"/>
</dbReference>
<dbReference type="GO" id="GO:0043363">
    <property type="term" value="P:nucleate erythrocyte differentiation"/>
    <property type="evidence" value="ECO:0000315"/>
    <property type="project" value="MGI"/>
</dbReference>
<dbReference type="GO" id="GO:0036344">
    <property type="term" value="P:platelet morphogenesis"/>
    <property type="evidence" value="ECO:0000315"/>
    <property type="project" value="MGI"/>
</dbReference>
<dbReference type="GO" id="GO:0016579">
    <property type="term" value="P:protein deubiquitination"/>
    <property type="evidence" value="ECO:0000250"/>
    <property type="project" value="UniProtKB"/>
</dbReference>
<dbReference type="GO" id="GO:0071108">
    <property type="term" value="P:protein K48-linked deubiquitination"/>
    <property type="evidence" value="ECO:0000250"/>
    <property type="project" value="UniProtKB"/>
</dbReference>
<dbReference type="GO" id="GO:0051726">
    <property type="term" value="P:regulation of cell cycle"/>
    <property type="evidence" value="ECO:0000250"/>
    <property type="project" value="UniProtKB"/>
</dbReference>
<dbReference type="GO" id="GO:0001558">
    <property type="term" value="P:regulation of cell growth"/>
    <property type="evidence" value="ECO:0000250"/>
    <property type="project" value="UniProtKB"/>
</dbReference>
<dbReference type="GO" id="GO:1900015">
    <property type="term" value="P:regulation of cytokine production involved in inflammatory response"/>
    <property type="evidence" value="ECO:0000315"/>
    <property type="project" value="MGI"/>
</dbReference>
<dbReference type="GO" id="GO:0050727">
    <property type="term" value="P:regulation of inflammatory response"/>
    <property type="evidence" value="ECO:0000315"/>
    <property type="project" value="MGI"/>
</dbReference>
<dbReference type="GO" id="GO:0002574">
    <property type="term" value="P:thrombocyte differentiation"/>
    <property type="evidence" value="ECO:0000315"/>
    <property type="project" value="MGI"/>
</dbReference>
<dbReference type="GO" id="GO:0001894">
    <property type="term" value="P:tissue homeostasis"/>
    <property type="evidence" value="ECO:0000315"/>
    <property type="project" value="MGI"/>
</dbReference>
<dbReference type="GO" id="GO:0006511">
    <property type="term" value="P:ubiquitin-dependent protein catabolic process"/>
    <property type="evidence" value="ECO:0007669"/>
    <property type="project" value="InterPro"/>
</dbReference>
<dbReference type="CDD" id="cd09617">
    <property type="entry name" value="Peptidase_C12_UCH37_BAP1"/>
    <property type="match status" value="1"/>
</dbReference>
<dbReference type="FunFam" id="1.20.58.860:FF:000002">
    <property type="entry name" value="Ubiquitin carboxyl-terminal hydrolase"/>
    <property type="match status" value="1"/>
</dbReference>
<dbReference type="FunFam" id="3.40.532.10:FF:000002">
    <property type="entry name" value="Ubiquitin carboxyl-terminal hydrolase"/>
    <property type="match status" value="1"/>
</dbReference>
<dbReference type="Gene3D" id="1.20.58.860">
    <property type="match status" value="1"/>
</dbReference>
<dbReference type="Gene3D" id="3.40.532.10">
    <property type="entry name" value="Peptidase C12, ubiquitin carboxyl-terminal hydrolase"/>
    <property type="match status" value="1"/>
</dbReference>
<dbReference type="InterPro" id="IPR038765">
    <property type="entry name" value="Papain-like_cys_pep_sf"/>
</dbReference>
<dbReference type="InterPro" id="IPR001578">
    <property type="entry name" value="Peptidase_C12_UCH"/>
</dbReference>
<dbReference type="InterPro" id="IPR036959">
    <property type="entry name" value="Peptidase_C12_UCH_sf"/>
</dbReference>
<dbReference type="InterPro" id="IPR041507">
    <property type="entry name" value="UCH_C"/>
</dbReference>
<dbReference type="PANTHER" id="PTHR10589">
    <property type="entry name" value="UBIQUITIN CARBOXYL-TERMINAL HYDROLASE"/>
    <property type="match status" value="1"/>
</dbReference>
<dbReference type="PANTHER" id="PTHR10589:SF28">
    <property type="entry name" value="UBIQUITIN CARBOXYL-TERMINAL HYDROLASE BAP1"/>
    <property type="match status" value="1"/>
</dbReference>
<dbReference type="Pfam" id="PF01088">
    <property type="entry name" value="Peptidase_C12"/>
    <property type="match status" value="1"/>
</dbReference>
<dbReference type="Pfam" id="PF18031">
    <property type="entry name" value="UCH_C"/>
    <property type="match status" value="1"/>
</dbReference>
<dbReference type="PRINTS" id="PR00707">
    <property type="entry name" value="UBCTHYDRLASE"/>
</dbReference>
<dbReference type="SUPFAM" id="SSF54001">
    <property type="entry name" value="Cysteine proteinases"/>
    <property type="match status" value="1"/>
</dbReference>
<dbReference type="PROSITE" id="PS52048">
    <property type="entry name" value="UCH_DOMAIN"/>
    <property type="match status" value="1"/>
</dbReference>
<dbReference type="PROSITE" id="PS52049">
    <property type="entry name" value="ULD"/>
    <property type="match status" value="1"/>
</dbReference>
<gene>
    <name type="primary">Bap1</name>
    <name type="synonym">Kiaa0272</name>
</gene>
<reference key="1">
    <citation type="submission" date="2000-08" db="EMBL/GenBank/DDBJ databases">
        <title>Ubiquitin C-terminal hydrolase.</title>
        <authorList>
            <person name="Mizuta R."/>
        </authorList>
    </citation>
    <scope>NUCLEOTIDE SEQUENCE [MRNA]</scope>
</reference>
<reference key="2">
    <citation type="journal article" date="2003" name="DNA Res.">
        <title>Prediction of the coding sequences of mouse homologues of KIAA gene: III. The complete nucleotide sequences of 500 mouse KIAA-homologous cDNAs identified by screening of terminal sequences of cDNA clones randomly sampled from size-fractionated libraries.</title>
        <authorList>
            <person name="Okazaki N."/>
            <person name="Kikuno R."/>
            <person name="Ohara R."/>
            <person name="Inamoto S."/>
            <person name="Koseki H."/>
            <person name="Hiraoka S."/>
            <person name="Saga Y."/>
            <person name="Nagase T."/>
            <person name="Ohara O."/>
            <person name="Koga H."/>
        </authorList>
    </citation>
    <scope>NUCLEOTIDE SEQUENCE [LARGE SCALE MRNA]</scope>
    <source>
        <tissue>Brain</tissue>
    </source>
</reference>
<reference key="3">
    <citation type="journal article" date="2005" name="Science">
        <title>The transcriptional landscape of the mammalian genome.</title>
        <authorList>
            <person name="Carninci P."/>
            <person name="Kasukawa T."/>
            <person name="Katayama S."/>
            <person name="Gough J."/>
            <person name="Frith M.C."/>
            <person name="Maeda N."/>
            <person name="Oyama R."/>
            <person name="Ravasi T."/>
            <person name="Lenhard B."/>
            <person name="Wells C."/>
            <person name="Kodzius R."/>
            <person name="Shimokawa K."/>
            <person name="Bajic V.B."/>
            <person name="Brenner S.E."/>
            <person name="Batalov S."/>
            <person name="Forrest A.R."/>
            <person name="Zavolan M."/>
            <person name="Davis M.J."/>
            <person name="Wilming L.G."/>
            <person name="Aidinis V."/>
            <person name="Allen J.E."/>
            <person name="Ambesi-Impiombato A."/>
            <person name="Apweiler R."/>
            <person name="Aturaliya R.N."/>
            <person name="Bailey T.L."/>
            <person name="Bansal M."/>
            <person name="Baxter L."/>
            <person name="Beisel K.W."/>
            <person name="Bersano T."/>
            <person name="Bono H."/>
            <person name="Chalk A.M."/>
            <person name="Chiu K.P."/>
            <person name="Choudhary V."/>
            <person name="Christoffels A."/>
            <person name="Clutterbuck D.R."/>
            <person name="Crowe M.L."/>
            <person name="Dalla E."/>
            <person name="Dalrymple B.P."/>
            <person name="de Bono B."/>
            <person name="Della Gatta G."/>
            <person name="di Bernardo D."/>
            <person name="Down T."/>
            <person name="Engstrom P."/>
            <person name="Fagiolini M."/>
            <person name="Faulkner G."/>
            <person name="Fletcher C.F."/>
            <person name="Fukushima T."/>
            <person name="Furuno M."/>
            <person name="Futaki S."/>
            <person name="Gariboldi M."/>
            <person name="Georgii-Hemming P."/>
            <person name="Gingeras T.R."/>
            <person name="Gojobori T."/>
            <person name="Green R.E."/>
            <person name="Gustincich S."/>
            <person name="Harbers M."/>
            <person name="Hayashi Y."/>
            <person name="Hensch T.K."/>
            <person name="Hirokawa N."/>
            <person name="Hill D."/>
            <person name="Huminiecki L."/>
            <person name="Iacono M."/>
            <person name="Ikeo K."/>
            <person name="Iwama A."/>
            <person name="Ishikawa T."/>
            <person name="Jakt M."/>
            <person name="Kanapin A."/>
            <person name="Katoh M."/>
            <person name="Kawasawa Y."/>
            <person name="Kelso J."/>
            <person name="Kitamura H."/>
            <person name="Kitano H."/>
            <person name="Kollias G."/>
            <person name="Krishnan S.P."/>
            <person name="Kruger A."/>
            <person name="Kummerfeld S.K."/>
            <person name="Kurochkin I.V."/>
            <person name="Lareau L.F."/>
            <person name="Lazarevic D."/>
            <person name="Lipovich L."/>
            <person name="Liu J."/>
            <person name="Liuni S."/>
            <person name="McWilliam S."/>
            <person name="Madan Babu M."/>
            <person name="Madera M."/>
            <person name="Marchionni L."/>
            <person name="Matsuda H."/>
            <person name="Matsuzawa S."/>
            <person name="Miki H."/>
            <person name="Mignone F."/>
            <person name="Miyake S."/>
            <person name="Morris K."/>
            <person name="Mottagui-Tabar S."/>
            <person name="Mulder N."/>
            <person name="Nakano N."/>
            <person name="Nakauchi H."/>
            <person name="Ng P."/>
            <person name="Nilsson R."/>
            <person name="Nishiguchi S."/>
            <person name="Nishikawa S."/>
            <person name="Nori F."/>
            <person name="Ohara O."/>
            <person name="Okazaki Y."/>
            <person name="Orlando V."/>
            <person name="Pang K.C."/>
            <person name="Pavan W.J."/>
            <person name="Pavesi G."/>
            <person name="Pesole G."/>
            <person name="Petrovsky N."/>
            <person name="Piazza S."/>
            <person name="Reed J."/>
            <person name="Reid J.F."/>
            <person name="Ring B.Z."/>
            <person name="Ringwald M."/>
            <person name="Rost B."/>
            <person name="Ruan Y."/>
            <person name="Salzberg S.L."/>
            <person name="Sandelin A."/>
            <person name="Schneider C."/>
            <person name="Schoenbach C."/>
            <person name="Sekiguchi K."/>
            <person name="Semple C.A."/>
            <person name="Seno S."/>
            <person name="Sessa L."/>
            <person name="Sheng Y."/>
            <person name="Shibata Y."/>
            <person name="Shimada H."/>
            <person name="Shimada K."/>
            <person name="Silva D."/>
            <person name="Sinclair B."/>
            <person name="Sperling S."/>
            <person name="Stupka E."/>
            <person name="Sugiura K."/>
            <person name="Sultana R."/>
            <person name="Takenaka Y."/>
            <person name="Taki K."/>
            <person name="Tammoja K."/>
            <person name="Tan S.L."/>
            <person name="Tang S."/>
            <person name="Taylor M.S."/>
            <person name="Tegner J."/>
            <person name="Teichmann S.A."/>
            <person name="Ueda H.R."/>
            <person name="van Nimwegen E."/>
            <person name="Verardo R."/>
            <person name="Wei C.L."/>
            <person name="Yagi K."/>
            <person name="Yamanishi H."/>
            <person name="Zabarovsky E."/>
            <person name="Zhu S."/>
            <person name="Zimmer A."/>
            <person name="Hide W."/>
            <person name="Bult C."/>
            <person name="Grimmond S.M."/>
            <person name="Teasdale R.D."/>
            <person name="Liu E.T."/>
            <person name="Brusic V."/>
            <person name="Quackenbush J."/>
            <person name="Wahlestedt C."/>
            <person name="Mattick J.S."/>
            <person name="Hume D.A."/>
            <person name="Kai C."/>
            <person name="Sasaki D."/>
            <person name="Tomaru Y."/>
            <person name="Fukuda S."/>
            <person name="Kanamori-Katayama M."/>
            <person name="Suzuki M."/>
            <person name="Aoki J."/>
            <person name="Arakawa T."/>
            <person name="Iida J."/>
            <person name="Imamura K."/>
            <person name="Itoh M."/>
            <person name="Kato T."/>
            <person name="Kawaji H."/>
            <person name="Kawagashira N."/>
            <person name="Kawashima T."/>
            <person name="Kojima M."/>
            <person name="Kondo S."/>
            <person name="Konno H."/>
            <person name="Nakano K."/>
            <person name="Ninomiya N."/>
            <person name="Nishio T."/>
            <person name="Okada M."/>
            <person name="Plessy C."/>
            <person name="Shibata K."/>
            <person name="Shiraki T."/>
            <person name="Suzuki S."/>
            <person name="Tagami M."/>
            <person name="Waki K."/>
            <person name="Watahiki A."/>
            <person name="Okamura-Oho Y."/>
            <person name="Suzuki H."/>
            <person name="Kawai J."/>
            <person name="Hayashizaki Y."/>
        </authorList>
    </citation>
    <scope>NUCLEOTIDE SEQUENCE [LARGE SCALE MRNA]</scope>
    <source>
        <strain>NOD</strain>
    </source>
</reference>
<reference key="4">
    <citation type="journal article" date="2004" name="Genome Res.">
        <title>The status, quality, and expansion of the NIH full-length cDNA project: the Mammalian Gene Collection (MGC).</title>
        <authorList>
            <consortium name="The MGC Project Team"/>
        </authorList>
    </citation>
    <scope>NUCLEOTIDE SEQUENCE [LARGE SCALE MRNA]</scope>
    <source>
        <strain>C57BL/6J</strain>
        <tissue>Fetal brain</tissue>
    </source>
</reference>
<reference key="5">
    <citation type="journal article" date="1998" name="Oncogene">
        <title>BAP1: a novel ubiquitin hydrolase which binds to the BRCA1 RING finger and enhances BRCA1-mediated cell growth suppression.</title>
        <authorList>
            <person name="Jensen D.E."/>
            <person name="Proctor M."/>
            <person name="Marquis S.T."/>
            <person name="Gardner H.P."/>
            <person name="Ha S.I."/>
            <person name="Chodosh L.A."/>
            <person name="Ishov A.M."/>
            <person name="Tommerup N."/>
            <person name="Vissing H."/>
            <person name="Sekido Y."/>
            <person name="Minna J."/>
            <person name="Borodovsky A."/>
            <person name="Schultz D.C."/>
            <person name="Wilkinson K.D."/>
            <person name="Maul G.G."/>
            <person name="Barlev N."/>
            <person name="Berger S."/>
            <person name="Prendergast G.C."/>
            <person name="Rauscher F.J. III"/>
        </authorList>
    </citation>
    <scope>TISSUE SPECIFICITY</scope>
</reference>
<reference key="6">
    <citation type="journal article" date="2008" name="Cancer Res.">
        <title>BRCA1-associated protein-1 is a tumor suppressor that requires deubiquitinating activity and nuclear localization.</title>
        <authorList>
            <person name="Ventii K.H."/>
            <person name="Devi N.S."/>
            <person name="Friedrich K.L."/>
            <person name="Chernova T.A."/>
            <person name="Tighiouart M."/>
            <person name="Van Meir E.G."/>
            <person name="Wilkinson K.D."/>
        </authorList>
    </citation>
    <scope>MUTAGENESIS OF CYS-91 AND 716-ARG--ARG-721</scope>
</reference>
<reference key="7">
    <citation type="journal article" date="2009" name="Mol. Cell. Proteomics">
        <title>Large scale localization of protein phosphorylation by use of electron capture dissociation mass spectrometry.</title>
        <authorList>
            <person name="Sweet S.M."/>
            <person name="Bailey C.M."/>
            <person name="Cunningham D.L."/>
            <person name="Heath J.K."/>
            <person name="Cooper H.J."/>
        </authorList>
    </citation>
    <scope>IDENTIFICATION BY MASS SPECTROMETRY [LARGE SCALE ANALYSIS]</scope>
    <source>
        <tissue>Embryonic fibroblast</tissue>
    </source>
</reference>
<reference key="8">
    <citation type="journal article" date="2010" name="Cell">
        <title>A tissue-specific atlas of mouse protein phosphorylation and expression.</title>
        <authorList>
            <person name="Huttlin E.L."/>
            <person name="Jedrychowski M.P."/>
            <person name="Elias J.E."/>
            <person name="Goswami T."/>
            <person name="Rad R."/>
            <person name="Beausoleil S.A."/>
            <person name="Villen J."/>
            <person name="Haas W."/>
            <person name="Sowa M.E."/>
            <person name="Gygi S.P."/>
        </authorList>
    </citation>
    <scope>PHOSPHORYLATION [LARGE SCALE ANALYSIS] AT SER-369 AND SER-395</scope>
    <scope>IDENTIFICATION BY MASS SPECTROMETRY [LARGE SCALE ANALYSIS]</scope>
    <source>
        <tissue>Brown adipose tissue</tissue>
        <tissue>Kidney</tissue>
        <tissue>Liver</tissue>
        <tissue>Pancreas</tissue>
        <tissue>Testis</tissue>
    </source>
</reference>
<reference key="9">
    <citation type="journal article" date="2020" name="Genome Res.">
        <title>PR-DUB maintains the expression of critical genes through FOXK1/2- and ASXL1/2/3-dependent recruitment to chromatin and H2AK119ub1 deubiquitination.</title>
        <authorList>
            <person name="Kolovos P."/>
            <person name="Nishimura K."/>
            <person name="Sankar A."/>
            <person name="Sidoli S."/>
            <person name="Cloos P.A."/>
            <person name="Helin K."/>
            <person name="Christensen J."/>
        </authorList>
    </citation>
    <scope>FUNCTION</scope>
    <scope>SUBCELLULAR LOCATION</scope>
</reference>
<reference key="10">
    <citation type="journal article" date="2021" name="Elife">
        <title>BAP1/ASXL complex modulation regulates epithelial-mesenchymal transition during trophoblast differentiation and invasion.</title>
        <authorList>
            <person name="Perez-Garcia V."/>
            <person name="Lea G."/>
            <person name="Lopez-Jimenez P."/>
            <person name="Okkenhaug H."/>
            <person name="Burton G.J."/>
            <person name="Moffett A."/>
            <person name="Turco M.Y."/>
            <person name="Hemberger M."/>
        </authorList>
    </citation>
    <scope>FUNCTION</scope>
    <scope>INTERACTION WITH ASXL1</scope>
    <scope>SUBCELLULAR LOCATION</scope>
    <scope>DEVELOPMENTAL STAGE</scope>
</reference>
<reference key="11">
    <citation type="journal article" date="2022" name="J. Cell Biol.">
        <title>Tumor suppressor BAP1 nuclear import is governed by transportin-1.</title>
        <authorList>
            <person name="Yang T.J."/>
            <person name="Li T.N."/>
            <person name="Huang R.S."/>
            <person name="Pan M.Y."/>
            <person name="Lin S.Y."/>
            <person name="Lin S."/>
            <person name="Wu K.P."/>
            <person name="Wang L.H."/>
            <person name="Hsu S.D."/>
        </authorList>
    </citation>
    <scope>FUNCTION</scope>
</reference>
<evidence type="ECO:0000250" key="1">
    <source>
        <dbReference type="UniProtKB" id="Q92560"/>
    </source>
</evidence>
<evidence type="ECO:0000255" key="2"/>
<evidence type="ECO:0000255" key="3">
    <source>
        <dbReference type="PROSITE-ProRule" id="PRU01393"/>
    </source>
</evidence>
<evidence type="ECO:0000255" key="4">
    <source>
        <dbReference type="PROSITE-ProRule" id="PRU01394"/>
    </source>
</evidence>
<evidence type="ECO:0000256" key="5">
    <source>
        <dbReference type="SAM" id="MobiDB-lite"/>
    </source>
</evidence>
<evidence type="ECO:0000269" key="6">
    <source>
    </source>
</evidence>
<evidence type="ECO:0000269" key="7">
    <source>
    </source>
</evidence>
<evidence type="ECO:0000269" key="8">
    <source>
    </source>
</evidence>
<evidence type="ECO:0000269" key="9">
    <source>
    </source>
</evidence>
<evidence type="ECO:0000269" key="10">
    <source>
    </source>
</evidence>
<evidence type="ECO:0000305" key="11"/>
<evidence type="ECO:0000305" key="12">
    <source>
    </source>
</evidence>
<evidence type="ECO:0007744" key="13">
    <source>
    </source>
</evidence>
<name>BAP1_MOUSE</name>
<keyword id="KW-0156">Chromatin regulator</keyword>
<keyword id="KW-0158">Chromosome</keyword>
<keyword id="KW-0175">Coiled coil</keyword>
<keyword id="KW-0963">Cytoplasm</keyword>
<keyword id="KW-0217">Developmental protein</keyword>
<keyword id="KW-0221">Differentiation</keyword>
<keyword id="KW-0378">Hydrolase</keyword>
<keyword id="KW-0539">Nucleus</keyword>
<keyword id="KW-0597">Phosphoprotein</keyword>
<keyword id="KW-0645">Protease</keyword>
<keyword id="KW-1185">Reference proteome</keyword>
<keyword id="KW-0788">Thiol protease</keyword>
<keyword id="KW-0832">Ubl conjugation</keyword>
<keyword id="KW-0833">Ubl conjugation pathway</keyword>
<feature type="chain" id="PRO_0000211070" description="Ubiquitin carboxyl-terminal hydrolase BAP1">
    <location>
        <begin position="1"/>
        <end position="728"/>
    </location>
</feature>
<feature type="domain" description="UCH catalytic" evidence="3">
    <location>
        <begin position="4"/>
        <end position="235"/>
    </location>
</feature>
<feature type="domain" description="ULD" evidence="4">
    <location>
        <begin position="669"/>
        <end position="697"/>
    </location>
</feature>
<feature type="region of interest" description="Disordered" evidence="5">
    <location>
        <begin position="273"/>
        <end position="333"/>
    </location>
</feature>
<feature type="region of interest" description="Disordered" evidence="5">
    <location>
        <begin position="372"/>
        <end position="436"/>
    </location>
</feature>
<feature type="region of interest" description="Disordered" evidence="5">
    <location>
        <begin position="463"/>
        <end position="523"/>
    </location>
</feature>
<feature type="region of interest" description="Disordered" evidence="5">
    <location>
        <begin position="574"/>
        <end position="623"/>
    </location>
</feature>
<feature type="region of interest" description="Interaction with BRCA1" evidence="1">
    <location>
        <begin position="595"/>
        <end position="720"/>
    </location>
</feature>
<feature type="region of interest" description="Interaction with YY1" evidence="1">
    <location>
        <begin position="641"/>
        <end position="685"/>
    </location>
</feature>
<feature type="region of interest" description="Interaction with nucleosomal DNA forming a DNA clamp with ASXL1" evidence="1">
    <location>
        <begin position="698"/>
        <end position="700"/>
    </location>
</feature>
<feature type="region of interest" description="Disordered" evidence="5">
    <location>
        <begin position="702"/>
        <end position="728"/>
    </location>
</feature>
<feature type="region of interest" description="Positively charged C-terminal extension (CTE)" evidence="1">
    <location>
        <begin position="712"/>
        <end position="728"/>
    </location>
</feature>
<feature type="coiled-coil region" evidence="2">
    <location>
        <begin position="629"/>
        <end position="660"/>
    </location>
</feature>
<feature type="short sequence motif" description="Arg-finger motif" evidence="1">
    <location>
        <begin position="56"/>
        <end position="60"/>
    </location>
</feature>
<feature type="short sequence motif" description="HBM-like motif" evidence="1">
    <location>
        <begin position="363"/>
        <end position="366"/>
    </location>
</feature>
<feature type="short sequence motif" description="Classical bipartite Nuclear localization signal (NLS)" evidence="1">
    <location>
        <begin position="698"/>
        <end position="721"/>
    </location>
</feature>
<feature type="short sequence motif" description="Non-classical PY-nuclear localization signal (PY-NLS)" evidence="1">
    <location>
        <begin position="716"/>
        <end position="723"/>
    </location>
</feature>
<feature type="short sequence motif" description="Nuclear localization signal" evidence="1">
    <location>
        <begin position="716"/>
        <end position="721"/>
    </location>
</feature>
<feature type="compositionally biased region" description="Acidic residues" evidence="5">
    <location>
        <begin position="395"/>
        <end position="408"/>
    </location>
</feature>
<feature type="compositionally biased region" description="Polar residues" evidence="5">
    <location>
        <begin position="427"/>
        <end position="436"/>
    </location>
</feature>
<feature type="compositionally biased region" description="Polar residues" evidence="5">
    <location>
        <begin position="479"/>
        <end position="523"/>
    </location>
</feature>
<feature type="compositionally biased region" description="Low complexity" evidence="5">
    <location>
        <begin position="581"/>
        <end position="596"/>
    </location>
</feature>
<feature type="compositionally biased region" description="Basic and acidic residues" evidence="5">
    <location>
        <begin position="597"/>
        <end position="613"/>
    </location>
</feature>
<feature type="active site" description="Nucleophile" evidence="3 6">
    <location>
        <position position="91"/>
    </location>
</feature>
<feature type="active site" description="Proton donor" evidence="3">
    <location>
        <position position="169"/>
    </location>
</feature>
<feature type="site" description="Transition state stabilizer" evidence="3">
    <location>
        <position position="85"/>
    </location>
</feature>
<feature type="site" description="Important for enzyme activity" evidence="3">
    <location>
        <position position="184"/>
    </location>
</feature>
<feature type="modified residue" description="Phosphoserine" evidence="1">
    <location>
        <position position="292"/>
    </location>
</feature>
<feature type="modified residue" description="Phosphoserine" evidence="13">
    <location>
        <position position="369"/>
    </location>
</feature>
<feature type="modified residue" description="Phosphoserine" evidence="13">
    <location>
        <position position="395"/>
    </location>
</feature>
<feature type="modified residue" description="Phosphothreonine" evidence="1">
    <location>
        <position position="492"/>
    </location>
</feature>
<feature type="modified residue" description="Phosphoserine" evidence="1">
    <location>
        <position position="520"/>
    </location>
</feature>
<feature type="modified residue" description="Phosphoserine" evidence="1">
    <location>
        <position position="536"/>
    </location>
</feature>
<feature type="modified residue" description="Phosphoserine" evidence="1">
    <location>
        <position position="584"/>
    </location>
</feature>
<feature type="mutagenesis site" description="Abolishes ability to suppress tumorigenicity when expressed in NCI-H226 cells." evidence="6">
    <original>C</original>
    <variation>A</variation>
    <location>
        <position position="91"/>
    </location>
</feature>
<feature type="mutagenesis site" description="Abolishes ability to suppress tumorigenicity when expressed in NCI-H226 cells." evidence="6">
    <original>RRKRSR</original>
    <variation>AAAAAA</variation>
    <location>
        <begin position="716"/>
        <end position="721"/>
    </location>
</feature>
<feature type="sequence conflict" description="In Ref. 2; BAC97918." evidence="11" ref="2">
    <original>A</original>
    <variation>V</variation>
    <location>
        <position position="725"/>
    </location>
</feature>
<protein>
    <recommendedName>
        <fullName>Ubiquitin carboxyl-terminal hydrolase BAP1</fullName>
        <ecNumber evidence="1">3.4.19.12</ecNumber>
    </recommendedName>
    <alternativeName>
        <fullName>BRCA1-associated protein 1</fullName>
    </alternativeName>
    <alternativeName>
        <fullName>Ubiquitin C-terminal hydrolase X4</fullName>
        <shortName>UCH-X4</shortName>
    </alternativeName>
</protein>